<protein>
    <recommendedName>
        <fullName evidence="4 5">Cyclic GMP-AMP synthase</fullName>
        <shortName>c-GAMP synthase</shortName>
        <shortName>c-GMP-AMP synthase</shortName>
        <ecNumber evidence="2">2.7.7.-</ecNumber>
    </recommendedName>
    <alternativeName>
        <fullName evidence="4">CD-NTase007</fullName>
        <shortName evidence="5">BfCdnB</shortName>
    </alternativeName>
</protein>
<sequence>MANLDTQFQEFYGELQITVTKKQALITSHNNLRTKIQKYFAKNHPEYVPSFYIQGSYKMGTTIRTRDDECDLDDGCYFIPKPEVKGITLQNWVMDAVNGTVGATPVHKNKCIRVNYAAGYHIDLPVYRKERCNDNTEHPELAVRDGEYELSDPREIVQWFNSKKKDNPVLIRLVSYLKSWCDTVRGFMPPGLAMTILASKYQKKHEGRDDIALRDTLKSIRTALQANFSCVVPGTPYDDLFESYDSNRQEKFMSELNGFIEDADRAVNEKNKLKASKLWKKHLGNRFHLAPDENDAEMSKLDKLRDIGNKVLTGIATTAHNGYIHAAEGVKNVSHRNYGNE</sequence>
<dbReference type="EC" id="2.7.7.-" evidence="2"/>
<dbReference type="EMBL" id="LIDT01000013">
    <property type="protein sequence ID" value="OCR33870.1"/>
    <property type="molecule type" value="Genomic_DNA"/>
</dbReference>
<dbReference type="RefSeq" id="WP_032579276.1">
    <property type="nucleotide sequence ID" value="NZ_PDCT01000018.1"/>
</dbReference>
<dbReference type="PDB" id="7LJO">
    <property type="method" value="X-ray"/>
    <property type="resolution" value="2.60 A"/>
    <property type="chains" value="A/B=1-341"/>
</dbReference>
<dbReference type="PDBsum" id="7LJO"/>
<dbReference type="SMR" id="A0A853PXE5"/>
<dbReference type="Proteomes" id="UP000093197">
    <property type="component" value="Unassembled WGS sequence"/>
</dbReference>
<dbReference type="GO" id="GO:0140701">
    <property type="term" value="F:3',3'-cyclic GMP-AMP synthase activity"/>
    <property type="evidence" value="ECO:0007669"/>
    <property type="project" value="InterPro"/>
</dbReference>
<dbReference type="GO" id="GO:0005524">
    <property type="term" value="F:ATP binding"/>
    <property type="evidence" value="ECO:0007669"/>
    <property type="project" value="UniProtKB-KW"/>
</dbReference>
<dbReference type="GO" id="GO:0005525">
    <property type="term" value="F:GTP binding"/>
    <property type="evidence" value="ECO:0007669"/>
    <property type="project" value="UniProtKB-KW"/>
</dbReference>
<dbReference type="GO" id="GO:0046872">
    <property type="term" value="F:metal ion binding"/>
    <property type="evidence" value="ECO:0007669"/>
    <property type="project" value="UniProtKB-KW"/>
</dbReference>
<dbReference type="GO" id="GO:0051607">
    <property type="term" value="P:defense response to virus"/>
    <property type="evidence" value="ECO:0007669"/>
    <property type="project" value="UniProtKB-KW"/>
</dbReference>
<dbReference type="GO" id="GO:0009117">
    <property type="term" value="P:nucleotide metabolic process"/>
    <property type="evidence" value="ECO:0007669"/>
    <property type="project" value="UniProtKB-KW"/>
</dbReference>
<dbReference type="InterPro" id="IPR048445">
    <property type="entry name" value="DncV-like_NTFase"/>
</dbReference>
<dbReference type="InterPro" id="IPR047805">
    <property type="entry name" value="GAMP_synthase"/>
</dbReference>
<dbReference type="NCBIfam" id="NF041078">
    <property type="entry name" value="cGAS"/>
    <property type="match status" value="1"/>
</dbReference>
<dbReference type="Pfam" id="PF21654">
    <property type="entry name" value="DncV-like_NTFase"/>
    <property type="match status" value="1"/>
</dbReference>
<evidence type="ECO:0000250" key="1">
    <source>
        <dbReference type="UniProtKB" id="Q9KVG7"/>
    </source>
</evidence>
<evidence type="ECO:0000269" key="2">
    <source>
    </source>
</evidence>
<evidence type="ECO:0000269" key="3">
    <source>
    </source>
</evidence>
<evidence type="ECO:0000303" key="4">
    <source>
    </source>
</evidence>
<evidence type="ECO:0000303" key="5">
    <source>
    </source>
</evidence>
<evidence type="ECO:0000305" key="6">
    <source>
    </source>
</evidence>
<evidence type="ECO:0000305" key="7">
    <source>
    </source>
</evidence>
<evidence type="ECO:0000305" key="8">
    <source>
    </source>
</evidence>
<evidence type="ECO:0000312" key="9">
    <source>
        <dbReference type="EMBL" id="OCR33870.1"/>
    </source>
</evidence>
<evidence type="ECO:0000312" key="10">
    <source>
        <dbReference type="PDB" id="7LJO"/>
    </source>
</evidence>
<evidence type="ECO:0007744" key="11">
    <source>
        <dbReference type="PDB" id="7LJO"/>
    </source>
</evidence>
<name>CDNB_BACFG</name>
<organism>
    <name type="scientific">Bacteroides fragilis</name>
    <dbReference type="NCBI Taxonomy" id="817"/>
    <lineage>
        <taxon>Bacteria</taxon>
        <taxon>Pseudomonadati</taxon>
        <taxon>Bacteroidota</taxon>
        <taxon>Bacteroidia</taxon>
        <taxon>Bacteroidales</taxon>
        <taxon>Bacteroidaceae</taxon>
        <taxon>Bacteroides</taxon>
    </lineage>
</organism>
<reference evidence="9" key="1">
    <citation type="journal article" date="2016" name="PLoS ONE">
        <title>Genomic Diversity of Enterotoxigenic Strains of Bacteroides fragilis.</title>
        <authorList>
            <person name="Pierce J.V."/>
            <person name="Bernstein H.D."/>
        </authorList>
    </citation>
    <scope>NUCLEOTIDE SEQUENCE [LARGE SCALE GENOMIC DNA]</scope>
    <source>
        <strain>20793-3</strain>
    </source>
</reference>
<reference key="2">
    <citation type="journal article" date="2019" name="Nature">
        <title>Bacterial cGAS-like enzymes synthesize diverse nucleotide signals.</title>
        <authorList>
            <person name="Whiteley A.T."/>
            <person name="Eaglesham J.B."/>
            <person name="de Oliveira Mann C.C."/>
            <person name="Morehouse B.R."/>
            <person name="Lowey B."/>
            <person name="Nieminen E.A."/>
            <person name="Danilchanka O."/>
            <person name="King D.S."/>
            <person name="Lee A.S.Y."/>
            <person name="Mekalanos J.J."/>
            <person name="Kranzusch P.J."/>
        </authorList>
    </citation>
    <scope>FUNCTION</scope>
    <scope>CATALYTIC ACTIVITY</scope>
    <scope>NOMENCLATURE</scope>
    <scope>SIMILARITY</scope>
    <source>
        <strain>ATCC 35350 / ECOR 31</strain>
    </source>
</reference>
<reference evidence="11" key="3">
    <citation type="journal article" date="2021" name="Cell Rep.">
        <title>Molecular basis of CD-NTase nucleotide selection in CBASS anti-phage defense.</title>
        <authorList>
            <person name="Govande A.A."/>
            <person name="Duncan-Lowey B."/>
            <person name="Eaglesham J.B."/>
            <person name="Whiteley A.T."/>
            <person name="Kranzusch P.J."/>
        </authorList>
    </citation>
    <scope>X-RAY CRYSTALLOGRAPHY (1.76 ANGSTROMS) IN COMPLEX WITH ADP AND MAGNESIUM</scope>
    <scope>PROBABLE ACTIVE SITES</scope>
    <scope>COFACTOR</scope>
    <scope>SUBUNIT</scope>
</reference>
<comment type="function">
    <text evidence="2 6 7">Cyclic nucleotide synthase (second messenger synthase) of a CBASS antivirus system (PubMed:30787435). CBASS (cyclic oligonucleotide-based antiphage signaling system) provides immunity against bacteriophage. The CD-NTase protein synthesizes cyclic nucleotides in response to infection; these serve as specific second messenger signals. The signals activate a diverse range of effectors, leading to bacterial cell death and thus abortive phage infection (PubMed:30787435). A type II-A(GA) CBASS system (Probable) (PubMed:27348220).</text>
</comment>
<comment type="function">
    <text evidence="1 2 7">Catalyzes the synthesis of 3'3'-cyclic GMP-AMP (3'3'-cGAMP) from GTP and ATP, a second messenger in cell signal transduction (PubMed:30787435). May make another product (Probable) (PubMed:30787435). Controls the activity of the CBASS cGAMP-activated phospholipase effector protein (By similarity).</text>
</comment>
<comment type="catalytic activity">
    <reaction evidence="2">
        <text>GTP + ATP = 3',3'-cGAMP + 2 diphosphate</text>
        <dbReference type="Rhea" id="RHEA:35647"/>
        <dbReference type="ChEBI" id="CHEBI:30616"/>
        <dbReference type="ChEBI" id="CHEBI:33019"/>
        <dbReference type="ChEBI" id="CHEBI:37565"/>
        <dbReference type="ChEBI" id="CHEBI:71501"/>
    </reaction>
    <physiologicalReaction direction="left-to-right" evidence="2">
        <dbReference type="Rhea" id="RHEA:35648"/>
    </physiologicalReaction>
</comment>
<comment type="cofactor">
    <cofactor evidence="3 10">
        <name>Mg(2+)</name>
        <dbReference type="ChEBI" id="CHEBI:18420"/>
    </cofactor>
    <text evidence="3 10">Binds 1 Mg(2+) ion per subunit.</text>
</comment>
<comment type="subunit">
    <text evidence="8">Monomer (PubMed:34077735).</text>
</comment>
<comment type="similarity">
    <text evidence="7">Belongs to the CD-NTase family. B04 subfamily.</text>
</comment>
<gene>
    <name evidence="5" type="primary">cdnB</name>
    <name evidence="9" type="ORF">AC094_12770</name>
    <name type="ORF">M075_1299</name>
</gene>
<accession>A0A853PXE5</accession>
<feature type="chain" id="PRO_0000459385" description="Cyclic GMP-AMP synthase">
    <location>
        <begin position="1"/>
        <end position="341"/>
    </location>
</feature>
<feature type="active site" evidence="8">
    <location>
        <position position="71"/>
    </location>
</feature>
<feature type="active site" evidence="8">
    <location>
        <position position="73"/>
    </location>
</feature>
<feature type="active site" evidence="8">
    <location>
        <position position="123"/>
    </location>
</feature>
<feature type="binding site" evidence="8 10">
    <location>
        <position position="56"/>
    </location>
    <ligand>
        <name>ATP</name>
        <dbReference type="ChEBI" id="CHEBI:30616"/>
        <label>1</label>
    </ligand>
</feature>
<feature type="binding site" evidence="3 10">
    <location>
        <position position="73"/>
    </location>
    <ligand>
        <name>Mg(2+)</name>
        <dbReference type="ChEBI" id="CHEBI:18420"/>
    </ligand>
</feature>
<feature type="binding site" evidence="8 10">
    <location>
        <position position="109"/>
    </location>
    <ligand>
        <name>ATP</name>
        <dbReference type="ChEBI" id="CHEBI:30616"/>
        <label>2</label>
    </ligand>
</feature>
<feature type="binding site" evidence="3 10">
    <location>
        <position position="123"/>
    </location>
    <ligand>
        <name>Mg(2+)</name>
        <dbReference type="ChEBI" id="CHEBI:18420"/>
    </ligand>
</feature>
<feature type="binding site" evidence="8 10">
    <location>
        <position position="192"/>
    </location>
    <ligand>
        <name>ATP</name>
        <dbReference type="ChEBI" id="CHEBI:30616"/>
        <label>1</label>
    </ligand>
</feature>
<feature type="binding site" evidence="8 10">
    <location>
        <position position="238"/>
    </location>
    <ligand>
        <name>ATP</name>
        <dbReference type="ChEBI" id="CHEBI:30616"/>
        <label>1</label>
    </ligand>
</feature>
<feature type="site" description="Important for nucleotide discrimination" evidence="8">
    <location>
        <position position="54"/>
    </location>
</feature>
<proteinExistence type="evidence at protein level"/>
<keyword id="KW-0002">3D-structure</keyword>
<keyword id="KW-0051">Antiviral defense</keyword>
<keyword id="KW-0067">ATP-binding</keyword>
<keyword id="KW-0342">GTP-binding</keyword>
<keyword id="KW-0460">Magnesium</keyword>
<keyword id="KW-0479">Metal-binding</keyword>
<keyword id="KW-0546">Nucleotide metabolism</keyword>
<keyword id="KW-0547">Nucleotide-binding</keyword>
<keyword id="KW-0548">Nucleotidyltransferase</keyword>
<keyword id="KW-0808">Transferase</keyword>